<proteinExistence type="inferred from homology"/>
<reference key="1">
    <citation type="journal article" date="2007" name="PLoS Genet.">
        <title>Patterns and implications of gene gain and loss in the evolution of Prochlorococcus.</title>
        <authorList>
            <person name="Kettler G.C."/>
            <person name="Martiny A.C."/>
            <person name="Huang K."/>
            <person name="Zucker J."/>
            <person name="Coleman M.L."/>
            <person name="Rodrigue S."/>
            <person name="Chen F."/>
            <person name="Lapidus A."/>
            <person name="Ferriera S."/>
            <person name="Johnson J."/>
            <person name="Steglich C."/>
            <person name="Church G.M."/>
            <person name="Richardson P."/>
            <person name="Chisholm S.W."/>
        </authorList>
    </citation>
    <scope>NUCLEOTIDE SEQUENCE [LARGE SCALE GENOMIC DNA]</scope>
    <source>
        <strain>NATL1A</strain>
    </source>
</reference>
<dbReference type="EMBL" id="CP000553">
    <property type="protein sequence ID" value="ABM74899.1"/>
    <property type="molecule type" value="Genomic_DNA"/>
</dbReference>
<dbReference type="RefSeq" id="WP_011823106.1">
    <property type="nucleotide sequence ID" value="NC_008819.1"/>
</dbReference>
<dbReference type="SMR" id="A2C089"/>
<dbReference type="KEGG" id="pme:NATL1_03351"/>
<dbReference type="eggNOG" id="COG1058">
    <property type="taxonomic scope" value="Bacteria"/>
</dbReference>
<dbReference type="eggNOG" id="COG1546">
    <property type="taxonomic scope" value="Bacteria"/>
</dbReference>
<dbReference type="HOGENOM" id="CLU_030805_9_3_3"/>
<dbReference type="Proteomes" id="UP000002592">
    <property type="component" value="Chromosome"/>
</dbReference>
<dbReference type="CDD" id="cd00885">
    <property type="entry name" value="cinA"/>
    <property type="match status" value="1"/>
</dbReference>
<dbReference type="Gene3D" id="3.30.70.2860">
    <property type="match status" value="1"/>
</dbReference>
<dbReference type="Gene3D" id="3.90.950.20">
    <property type="entry name" value="CinA-like"/>
    <property type="match status" value="1"/>
</dbReference>
<dbReference type="Gene3D" id="3.40.980.10">
    <property type="entry name" value="MoaB/Mog-like domain"/>
    <property type="match status" value="1"/>
</dbReference>
<dbReference type="HAMAP" id="MF_00226_B">
    <property type="entry name" value="CinA_B"/>
    <property type="match status" value="1"/>
</dbReference>
<dbReference type="InterPro" id="IPR050101">
    <property type="entry name" value="CinA"/>
</dbReference>
<dbReference type="InterPro" id="IPR036653">
    <property type="entry name" value="CinA-like_C"/>
</dbReference>
<dbReference type="InterPro" id="IPR008136">
    <property type="entry name" value="CinA_C"/>
</dbReference>
<dbReference type="InterPro" id="IPR041424">
    <property type="entry name" value="CinA_KH"/>
</dbReference>
<dbReference type="InterPro" id="IPR008135">
    <property type="entry name" value="Competence-induced_CinA"/>
</dbReference>
<dbReference type="InterPro" id="IPR036425">
    <property type="entry name" value="MoaB/Mog-like_dom_sf"/>
</dbReference>
<dbReference type="InterPro" id="IPR001453">
    <property type="entry name" value="MoaB/Mog_dom"/>
</dbReference>
<dbReference type="NCBIfam" id="TIGR00200">
    <property type="entry name" value="cinA_nterm"/>
    <property type="match status" value="1"/>
</dbReference>
<dbReference type="NCBIfam" id="TIGR00199">
    <property type="entry name" value="PncC_domain"/>
    <property type="match status" value="1"/>
</dbReference>
<dbReference type="NCBIfam" id="NF001813">
    <property type="entry name" value="PRK00549.1"/>
    <property type="match status" value="1"/>
</dbReference>
<dbReference type="PANTHER" id="PTHR13939">
    <property type="entry name" value="NICOTINAMIDE-NUCLEOTIDE AMIDOHYDROLASE PNCC"/>
    <property type="match status" value="1"/>
</dbReference>
<dbReference type="PANTHER" id="PTHR13939:SF0">
    <property type="entry name" value="NMN AMIDOHYDROLASE-LIKE PROTEIN YFAY"/>
    <property type="match status" value="1"/>
</dbReference>
<dbReference type="Pfam" id="PF02464">
    <property type="entry name" value="CinA"/>
    <property type="match status" value="1"/>
</dbReference>
<dbReference type="Pfam" id="PF18146">
    <property type="entry name" value="CinA_KH"/>
    <property type="match status" value="1"/>
</dbReference>
<dbReference type="Pfam" id="PF00994">
    <property type="entry name" value="MoCF_biosynth"/>
    <property type="match status" value="1"/>
</dbReference>
<dbReference type="PIRSF" id="PIRSF006728">
    <property type="entry name" value="CinA"/>
    <property type="match status" value="1"/>
</dbReference>
<dbReference type="SMART" id="SM00852">
    <property type="entry name" value="MoCF_biosynth"/>
    <property type="match status" value="1"/>
</dbReference>
<dbReference type="SUPFAM" id="SSF142433">
    <property type="entry name" value="CinA-like"/>
    <property type="match status" value="1"/>
</dbReference>
<dbReference type="SUPFAM" id="SSF53218">
    <property type="entry name" value="Molybdenum cofactor biosynthesis proteins"/>
    <property type="match status" value="1"/>
</dbReference>
<accession>A2C089</accession>
<protein>
    <recommendedName>
        <fullName evidence="1">CinA-like protein</fullName>
    </recommendedName>
</protein>
<feature type="chain" id="PRO_1000058719" description="CinA-like protein">
    <location>
        <begin position="1"/>
        <end position="430"/>
    </location>
</feature>
<sequence>MKTSKEITINKKNKFGAEILCIGSEILLGNIVNTNSQWIAEQLAILGIPHFRQTVIGDNPARLEEAILEASNRSEILITTGGLGPTPDDITTKVIADTFKTPLEQRNDILIDLRNKSKDKDSKLSDSQKKQSLVPKGAKIINNYSGTAPGIYWSPKENFTILTFPGVPSELKEMWAKEASKLLISNNLSKEVISSKVLHFAGISESLLADKIPHLLISKNPTVATYARTGEVKVRITAKGENSEETNRLIEPIKKELTQITGLKCFGIDNETLEEIVFKLLLKRKETIAVAESCTGGGIGSKLTKIPGSSKIFHGGVIAYNNSIKQRLLGVPEEIINTHGAVSKPVVESMARGVQIKFKVNWAISVSGIAGPTGGSKSKPVGLVNFCIKGPKTLITWEENFGSNKTREDIQKLSVLNALDRLRLSIIMAN</sequence>
<gene>
    <name type="ordered locus">NATL1_03351</name>
</gene>
<name>CINAL_PROM1</name>
<comment type="similarity">
    <text evidence="1">Belongs to the CinA family.</text>
</comment>
<organism>
    <name type="scientific">Prochlorococcus marinus (strain NATL1A)</name>
    <dbReference type="NCBI Taxonomy" id="167555"/>
    <lineage>
        <taxon>Bacteria</taxon>
        <taxon>Bacillati</taxon>
        <taxon>Cyanobacteriota</taxon>
        <taxon>Cyanophyceae</taxon>
        <taxon>Synechococcales</taxon>
        <taxon>Prochlorococcaceae</taxon>
        <taxon>Prochlorococcus</taxon>
    </lineage>
</organism>
<evidence type="ECO:0000255" key="1">
    <source>
        <dbReference type="HAMAP-Rule" id="MF_00226"/>
    </source>
</evidence>